<accession>Q24179</accession>
<accession>B7YZZ1</accession>
<accession>B7YZZ2</accession>
<accession>O02560</accession>
<accession>Q4V684</accession>
<accession>Q7KU13</accession>
<accession>Q8SZB1</accession>
<accession>Q9VQC9</accession>
<name>SLY1_DROME</name>
<sequence length="639" mass="72366">MLTLRERQINAIKQMLNLNSQQPKALAAEPVWKILIYDRVGQDIISPIISIKELRELGVTLHVQLHSDRDSIPDVPAIYFCLPTDENLDRIQQDFSSGLYDVYHLNFLAPITRSKIENLAAAALHAGCVANIHRVYDQYVNFISLEDDFFILKHQQSDQLSYYAINRANTRDEEMEALMDSIVDSLFALFVTLGNVPIIRCPRNSAAEMVARKLEKKLRENLWDARANLFHMDATQAGGGVFSFQRPVLLLLDRNMDLATPLHHTWSYQALVHDVLDLGLNLVYVEDETASAGARKKPKACDLDRNDRFWMTHKGSPFPTVAEAIQEELESYRNSEEEIKRLKTSMGIEGESDIAFSLVNDTTARLTNAVNSLPQLMEKKRLIDMHTKIATAILNFIKARRLDSFFEIEEKVMSKQTLDRPLLDLLRDGEFGQAEDKLRLYIIYFICAQQLPESEQERLKEALQAAGCDLTALAYVQRWKGIMNRSPSISQATQYEGGGTKTVSMFTKLVSQGSSFVMEGVKNLVVKRHNLPVTKITEQVMECRSNAETDDYLYLDPKLLKGGEVLPKNRAPFQDAVVFMVGGGNYIEYQNLVDFIKQKQTSNVQRRIIYGASTLTNARQFLKELSALGGEIQSPTATS</sequence>
<reference evidence="5" key="1">
    <citation type="journal article" date="1996" name="Genes Dev.">
        <title>Promoter specificity mediates the independent regulation of neighboring genes.</title>
        <authorList>
            <person name="Merli C."/>
            <person name="Bergstrom D.E."/>
            <person name="Cygan J.A."/>
            <person name="Blackman R.K."/>
        </authorList>
    </citation>
    <scope>NUCLEOTIDE SEQUENCE [GENOMIC DNA]</scope>
    <scope>FUNCTION</scope>
    <scope>TISSUE SPECIFICITY</scope>
    <source>
        <strain evidence="4">Oregon-R</strain>
    </source>
</reference>
<reference key="2">
    <citation type="journal article" date="2000" name="Science">
        <title>The genome sequence of Drosophila melanogaster.</title>
        <authorList>
            <person name="Adams M.D."/>
            <person name="Celniker S.E."/>
            <person name="Holt R.A."/>
            <person name="Evans C.A."/>
            <person name="Gocayne J.D."/>
            <person name="Amanatides P.G."/>
            <person name="Scherer S.E."/>
            <person name="Li P.W."/>
            <person name="Hoskins R.A."/>
            <person name="Galle R.F."/>
            <person name="George R.A."/>
            <person name="Lewis S.E."/>
            <person name="Richards S."/>
            <person name="Ashburner M."/>
            <person name="Henderson S.N."/>
            <person name="Sutton G.G."/>
            <person name="Wortman J.R."/>
            <person name="Yandell M.D."/>
            <person name="Zhang Q."/>
            <person name="Chen L.X."/>
            <person name="Brandon R.C."/>
            <person name="Rogers Y.-H.C."/>
            <person name="Blazej R.G."/>
            <person name="Champe M."/>
            <person name="Pfeiffer B.D."/>
            <person name="Wan K.H."/>
            <person name="Doyle C."/>
            <person name="Baxter E.G."/>
            <person name="Helt G."/>
            <person name="Nelson C.R."/>
            <person name="Miklos G.L.G."/>
            <person name="Abril J.F."/>
            <person name="Agbayani A."/>
            <person name="An H.-J."/>
            <person name="Andrews-Pfannkoch C."/>
            <person name="Baldwin D."/>
            <person name="Ballew R.M."/>
            <person name="Basu A."/>
            <person name="Baxendale J."/>
            <person name="Bayraktaroglu L."/>
            <person name="Beasley E.M."/>
            <person name="Beeson K.Y."/>
            <person name="Benos P.V."/>
            <person name="Berman B.P."/>
            <person name="Bhandari D."/>
            <person name="Bolshakov S."/>
            <person name="Borkova D."/>
            <person name="Botchan M.R."/>
            <person name="Bouck J."/>
            <person name="Brokstein P."/>
            <person name="Brottier P."/>
            <person name="Burtis K.C."/>
            <person name="Busam D.A."/>
            <person name="Butler H."/>
            <person name="Cadieu E."/>
            <person name="Center A."/>
            <person name="Chandra I."/>
            <person name="Cherry J.M."/>
            <person name="Cawley S."/>
            <person name="Dahlke C."/>
            <person name="Davenport L.B."/>
            <person name="Davies P."/>
            <person name="de Pablos B."/>
            <person name="Delcher A."/>
            <person name="Deng Z."/>
            <person name="Mays A.D."/>
            <person name="Dew I."/>
            <person name="Dietz S.M."/>
            <person name="Dodson K."/>
            <person name="Doup L.E."/>
            <person name="Downes M."/>
            <person name="Dugan-Rocha S."/>
            <person name="Dunkov B.C."/>
            <person name="Dunn P."/>
            <person name="Durbin K.J."/>
            <person name="Evangelista C.C."/>
            <person name="Ferraz C."/>
            <person name="Ferriera S."/>
            <person name="Fleischmann W."/>
            <person name="Fosler C."/>
            <person name="Gabrielian A.E."/>
            <person name="Garg N.S."/>
            <person name="Gelbart W.M."/>
            <person name="Glasser K."/>
            <person name="Glodek A."/>
            <person name="Gong F."/>
            <person name="Gorrell J.H."/>
            <person name="Gu Z."/>
            <person name="Guan P."/>
            <person name="Harris M."/>
            <person name="Harris N.L."/>
            <person name="Harvey D.A."/>
            <person name="Heiman T.J."/>
            <person name="Hernandez J.R."/>
            <person name="Houck J."/>
            <person name="Hostin D."/>
            <person name="Houston K.A."/>
            <person name="Howland T.J."/>
            <person name="Wei M.-H."/>
            <person name="Ibegwam C."/>
            <person name="Jalali M."/>
            <person name="Kalush F."/>
            <person name="Karpen G.H."/>
            <person name="Ke Z."/>
            <person name="Kennison J.A."/>
            <person name="Ketchum K.A."/>
            <person name="Kimmel B.E."/>
            <person name="Kodira C.D."/>
            <person name="Kraft C.L."/>
            <person name="Kravitz S."/>
            <person name="Kulp D."/>
            <person name="Lai Z."/>
            <person name="Lasko P."/>
            <person name="Lei Y."/>
            <person name="Levitsky A.A."/>
            <person name="Li J.H."/>
            <person name="Li Z."/>
            <person name="Liang Y."/>
            <person name="Lin X."/>
            <person name="Liu X."/>
            <person name="Mattei B."/>
            <person name="McIntosh T.C."/>
            <person name="McLeod M.P."/>
            <person name="McPherson D."/>
            <person name="Merkulov G."/>
            <person name="Milshina N.V."/>
            <person name="Mobarry C."/>
            <person name="Morris J."/>
            <person name="Moshrefi A."/>
            <person name="Mount S.M."/>
            <person name="Moy M."/>
            <person name="Murphy B."/>
            <person name="Murphy L."/>
            <person name="Muzny D.M."/>
            <person name="Nelson D.L."/>
            <person name="Nelson D.R."/>
            <person name="Nelson K.A."/>
            <person name="Nixon K."/>
            <person name="Nusskern D.R."/>
            <person name="Pacleb J.M."/>
            <person name="Palazzolo M."/>
            <person name="Pittman G.S."/>
            <person name="Pan S."/>
            <person name="Pollard J."/>
            <person name="Puri V."/>
            <person name="Reese M.G."/>
            <person name="Reinert K."/>
            <person name="Remington K."/>
            <person name="Saunders R.D.C."/>
            <person name="Scheeler F."/>
            <person name="Shen H."/>
            <person name="Shue B.C."/>
            <person name="Siden-Kiamos I."/>
            <person name="Simpson M."/>
            <person name="Skupski M.P."/>
            <person name="Smith T.J."/>
            <person name="Spier E."/>
            <person name="Spradling A.C."/>
            <person name="Stapleton M."/>
            <person name="Strong R."/>
            <person name="Sun E."/>
            <person name="Svirskas R."/>
            <person name="Tector C."/>
            <person name="Turner R."/>
            <person name="Venter E."/>
            <person name="Wang A.H."/>
            <person name="Wang X."/>
            <person name="Wang Z.-Y."/>
            <person name="Wassarman D.A."/>
            <person name="Weinstock G.M."/>
            <person name="Weissenbach J."/>
            <person name="Williams S.M."/>
            <person name="Woodage T."/>
            <person name="Worley K.C."/>
            <person name="Wu D."/>
            <person name="Yang S."/>
            <person name="Yao Q.A."/>
            <person name="Ye J."/>
            <person name="Yeh R.-F."/>
            <person name="Zaveri J.S."/>
            <person name="Zhan M."/>
            <person name="Zhang G."/>
            <person name="Zhao Q."/>
            <person name="Zheng L."/>
            <person name="Zheng X.H."/>
            <person name="Zhong F.N."/>
            <person name="Zhong W."/>
            <person name="Zhou X."/>
            <person name="Zhu S.C."/>
            <person name="Zhu X."/>
            <person name="Smith H.O."/>
            <person name="Gibbs R.A."/>
            <person name="Myers E.W."/>
            <person name="Rubin G.M."/>
            <person name="Venter J.C."/>
        </authorList>
    </citation>
    <scope>NUCLEOTIDE SEQUENCE [LARGE SCALE GENOMIC DNA]</scope>
    <source>
        <strain evidence="2">Berkeley</strain>
    </source>
</reference>
<reference evidence="5" key="3">
    <citation type="journal article" date="2002" name="Genome Biol.">
        <title>Annotation of the Drosophila melanogaster euchromatic genome: a systematic review.</title>
        <authorList>
            <person name="Misra S."/>
            <person name="Crosby M.A."/>
            <person name="Mungall C.J."/>
            <person name="Matthews B.B."/>
            <person name="Campbell K.S."/>
            <person name="Hradecky P."/>
            <person name="Huang Y."/>
            <person name="Kaminker J.S."/>
            <person name="Millburn G.H."/>
            <person name="Prochnik S.E."/>
            <person name="Smith C.D."/>
            <person name="Tupy J.L."/>
            <person name="Whitfield E.J."/>
            <person name="Bayraktaroglu L."/>
            <person name="Berman B.P."/>
            <person name="Bettencourt B.R."/>
            <person name="Celniker S.E."/>
            <person name="de Grey A.D.N.J."/>
            <person name="Drysdale R.A."/>
            <person name="Harris N.L."/>
            <person name="Richter J."/>
            <person name="Russo S."/>
            <person name="Schroeder A.J."/>
            <person name="Shu S.Q."/>
            <person name="Stapleton M."/>
            <person name="Yamada C."/>
            <person name="Ashburner M."/>
            <person name="Gelbart W.M."/>
            <person name="Rubin G.M."/>
            <person name="Lewis S.E."/>
        </authorList>
    </citation>
    <scope>GENOME REANNOTATION</scope>
    <source>
        <strain>Berkeley</strain>
    </source>
</reference>
<reference evidence="5 6" key="4">
    <citation type="journal article" date="2002" name="Genome Biol.">
        <title>A Drosophila full-length cDNA resource.</title>
        <authorList>
            <person name="Stapleton M."/>
            <person name="Carlson J.W."/>
            <person name="Brokstein P."/>
            <person name="Yu C."/>
            <person name="Champe M."/>
            <person name="George R.A."/>
            <person name="Guarin H."/>
            <person name="Kronmiller B."/>
            <person name="Pacleb J.M."/>
            <person name="Park S."/>
            <person name="Wan K.H."/>
            <person name="Rubin G.M."/>
            <person name="Celniker S.E."/>
        </authorList>
    </citation>
    <scope>NUCLEOTIDE SEQUENCE [LARGE SCALE MRNA]</scope>
    <source>
        <strain evidence="3">Berkeley</strain>
        <tissue evidence="3">Embryo</tissue>
    </source>
</reference>
<reference key="5">
    <citation type="submission" date="2005-05" db="EMBL/GenBank/DDBJ databases">
        <authorList>
            <person name="Stapleton M."/>
            <person name="Carlson J.W."/>
            <person name="Chavez C."/>
            <person name="Frise E."/>
            <person name="George R.A."/>
            <person name="Pacleb J.M."/>
            <person name="Park S."/>
            <person name="Wan K.H."/>
            <person name="Yu C."/>
            <person name="Celniker S.E."/>
        </authorList>
    </citation>
    <scope>NUCLEOTIDE SEQUENCE [LARGE SCALE MRNA] OF 1-182</scope>
    <source>
        <strain>Berkeley</strain>
    </source>
</reference>
<dbReference type="EMBL" id="U63852">
    <property type="protein sequence ID" value="AAC47550.1"/>
    <property type="status" value="ALT_SEQ"/>
    <property type="molecule type" value="Genomic_DNA"/>
</dbReference>
<dbReference type="EMBL" id="AE014134">
    <property type="protein sequence ID" value="AAF51247.3"/>
    <property type="molecule type" value="Genomic_DNA"/>
</dbReference>
<dbReference type="EMBL" id="AE014134">
    <property type="protein sequence ID" value="ACL82976.2"/>
    <property type="molecule type" value="Genomic_DNA"/>
</dbReference>
<dbReference type="EMBL" id="AY070995">
    <property type="protein sequence ID" value="AAL48617.1"/>
    <property type="molecule type" value="mRNA"/>
</dbReference>
<dbReference type="EMBL" id="BT022422">
    <property type="protein sequence ID" value="AAY54838.1"/>
    <property type="status" value="ALT_SEQ"/>
    <property type="molecule type" value="mRNA"/>
</dbReference>
<dbReference type="RefSeq" id="NP_001137769.2">
    <property type="nucleotide sequence ID" value="NM_001144297.2"/>
</dbReference>
<dbReference type="RefSeq" id="NP_995614.1">
    <property type="nucleotide sequence ID" value="NM_205892.2"/>
</dbReference>
<dbReference type="SMR" id="Q24179"/>
<dbReference type="BioGRID" id="59661">
    <property type="interactions" value="32"/>
</dbReference>
<dbReference type="FunCoup" id="Q24179">
    <property type="interactions" value="2734"/>
</dbReference>
<dbReference type="IntAct" id="Q24179">
    <property type="interactions" value="27"/>
</dbReference>
<dbReference type="STRING" id="7227.FBpp0307162"/>
<dbReference type="GlyGen" id="Q24179">
    <property type="glycosylation" value="1 site"/>
</dbReference>
<dbReference type="PaxDb" id="7227-FBpp0089084"/>
<dbReference type="DNASU" id="33434"/>
<dbReference type="EnsemblMetazoa" id="FBtr0077782">
    <property type="protein sequence ID" value="FBpp0077461"/>
    <property type="gene ID" value="FBgn0264978"/>
</dbReference>
<dbReference type="EnsemblMetazoa" id="FBtr0335169">
    <property type="protein sequence ID" value="FBpp0307162"/>
    <property type="gene ID" value="FBgn0264978"/>
</dbReference>
<dbReference type="GeneID" id="33434"/>
<dbReference type="KEGG" id="dme:Dmel_CG3539"/>
<dbReference type="AGR" id="FB:FBgn0264978"/>
<dbReference type="CTD" id="33434"/>
<dbReference type="FlyBase" id="FBgn0264978">
    <property type="gene designation" value="Slh"/>
</dbReference>
<dbReference type="VEuPathDB" id="VectorBase:FBgn0264978"/>
<dbReference type="eggNOG" id="KOG1301">
    <property type="taxonomic scope" value="Eukaryota"/>
</dbReference>
<dbReference type="GeneTree" id="ENSGT00550000074845"/>
<dbReference type="HOGENOM" id="CLU_016216_3_1_1"/>
<dbReference type="InParanoid" id="Q24179"/>
<dbReference type="OMA" id="VNDLRAW"/>
<dbReference type="OrthoDB" id="10251230at2759"/>
<dbReference type="PhylomeDB" id="Q24179"/>
<dbReference type="Reactome" id="R-DME-204005">
    <property type="pathway name" value="COPII-mediated vesicle transport"/>
</dbReference>
<dbReference type="Reactome" id="R-DME-8980692">
    <property type="pathway name" value="RHOA GTPase cycle"/>
</dbReference>
<dbReference type="BioGRID-ORCS" id="33434">
    <property type="hits" value="0 hits in 1 CRISPR screen"/>
</dbReference>
<dbReference type="GenomeRNAi" id="33434"/>
<dbReference type="PRO" id="PR:Q24179"/>
<dbReference type="Proteomes" id="UP000000803">
    <property type="component" value="Chromosome 2L"/>
</dbReference>
<dbReference type="Bgee" id="FBgn0264978">
    <property type="expression patterns" value="Expressed in embryonic/larval hemocyte (Drosophila) and 116 other cell types or tissues"/>
</dbReference>
<dbReference type="GO" id="GO:0005801">
    <property type="term" value="C:cis-Golgi network"/>
    <property type="evidence" value="ECO:0000250"/>
    <property type="project" value="ParkinsonsUK-UCL"/>
</dbReference>
<dbReference type="GO" id="GO:0000139">
    <property type="term" value="C:Golgi membrane"/>
    <property type="evidence" value="ECO:0000318"/>
    <property type="project" value="GO_Central"/>
</dbReference>
<dbReference type="GO" id="GO:0005798">
    <property type="term" value="C:Golgi-associated vesicle"/>
    <property type="evidence" value="ECO:0000250"/>
    <property type="project" value="ParkinsonsUK-UCL"/>
</dbReference>
<dbReference type="GO" id="GO:0044877">
    <property type="term" value="F:protein-containing complex binding"/>
    <property type="evidence" value="ECO:0000250"/>
    <property type="project" value="ParkinsonsUK-UCL"/>
</dbReference>
<dbReference type="GO" id="GO:0000149">
    <property type="term" value="F:SNARE binding"/>
    <property type="evidence" value="ECO:0000250"/>
    <property type="project" value="FlyBase"/>
</dbReference>
<dbReference type="GO" id="GO:0019905">
    <property type="term" value="F:syntaxin binding"/>
    <property type="evidence" value="ECO:0000250"/>
    <property type="project" value="ParkinsonsUK-UCL"/>
</dbReference>
<dbReference type="GO" id="GO:0006888">
    <property type="term" value="P:endoplasmic reticulum to Golgi vesicle-mediated transport"/>
    <property type="evidence" value="ECO:0000318"/>
    <property type="project" value="GO_Central"/>
</dbReference>
<dbReference type="GO" id="GO:0006886">
    <property type="term" value="P:intracellular protein transport"/>
    <property type="evidence" value="ECO:0000318"/>
    <property type="project" value="GO_Central"/>
</dbReference>
<dbReference type="GO" id="GO:0006892">
    <property type="term" value="P:post-Golgi vesicle-mediated transport"/>
    <property type="evidence" value="ECO:0000250"/>
    <property type="project" value="ParkinsonsUK-UCL"/>
</dbReference>
<dbReference type="GO" id="GO:0060628">
    <property type="term" value="P:regulation of ER to Golgi vesicle-mediated transport"/>
    <property type="evidence" value="ECO:0000250"/>
    <property type="project" value="ParkinsonsUK-UCL"/>
</dbReference>
<dbReference type="GO" id="GO:0001666">
    <property type="term" value="P:response to hypoxia"/>
    <property type="evidence" value="ECO:0000250"/>
    <property type="project" value="ParkinsonsUK-UCL"/>
</dbReference>
<dbReference type="GO" id="GO:0009636">
    <property type="term" value="P:response to toxic substance"/>
    <property type="evidence" value="ECO:0000250"/>
    <property type="project" value="ParkinsonsUK-UCL"/>
</dbReference>
<dbReference type="GO" id="GO:0006890">
    <property type="term" value="P:retrograde vesicle-mediated transport, Golgi to endoplasmic reticulum"/>
    <property type="evidence" value="ECO:0000250"/>
    <property type="project" value="ParkinsonsUK-UCL"/>
</dbReference>
<dbReference type="GO" id="GO:0016192">
    <property type="term" value="P:vesicle-mediated transport"/>
    <property type="evidence" value="ECO:0000250"/>
    <property type="project" value="FlyBase"/>
</dbReference>
<dbReference type="GO" id="GO:0048190">
    <property type="term" value="P:wing disc dorsal/ventral pattern formation"/>
    <property type="evidence" value="ECO:0000316"/>
    <property type="project" value="FlyBase"/>
</dbReference>
<dbReference type="FunFam" id="1.25.40.60:FF:000002">
    <property type="entry name" value="Sec1 family domain containing 1"/>
    <property type="match status" value="1"/>
</dbReference>
<dbReference type="FunFam" id="3.40.50.2060:FF:000002">
    <property type="entry name" value="sec1 family domain-containing protein 1"/>
    <property type="match status" value="1"/>
</dbReference>
<dbReference type="Gene3D" id="1.25.40.60">
    <property type="match status" value="1"/>
</dbReference>
<dbReference type="Gene3D" id="3.40.50.1910">
    <property type="match status" value="1"/>
</dbReference>
<dbReference type="Gene3D" id="3.40.50.2060">
    <property type="match status" value="1"/>
</dbReference>
<dbReference type="Gene3D" id="3.90.830.10">
    <property type="entry name" value="Syntaxin Binding Protein 1, Chain A, domain 2"/>
    <property type="match status" value="1"/>
</dbReference>
<dbReference type="InterPro" id="IPR043154">
    <property type="entry name" value="Sec-1-like_dom1"/>
</dbReference>
<dbReference type="InterPro" id="IPR043127">
    <property type="entry name" value="Sec-1-like_dom3a"/>
</dbReference>
<dbReference type="InterPro" id="IPR001619">
    <property type="entry name" value="Sec1-like"/>
</dbReference>
<dbReference type="InterPro" id="IPR027482">
    <property type="entry name" value="Sec1-like_dom2"/>
</dbReference>
<dbReference type="InterPro" id="IPR036045">
    <property type="entry name" value="Sec1-like_sf"/>
</dbReference>
<dbReference type="PANTHER" id="PTHR11679">
    <property type="entry name" value="VESICLE PROTEIN SORTING-ASSOCIATED"/>
    <property type="match status" value="1"/>
</dbReference>
<dbReference type="Pfam" id="PF00995">
    <property type="entry name" value="Sec1"/>
    <property type="match status" value="1"/>
</dbReference>
<dbReference type="PIRSF" id="PIRSF005715">
    <property type="entry name" value="VPS45_Sec1"/>
    <property type="match status" value="1"/>
</dbReference>
<dbReference type="SUPFAM" id="SSF56815">
    <property type="entry name" value="Sec1/munc18-like (SM) proteins"/>
    <property type="match status" value="1"/>
</dbReference>
<gene>
    <name type="primary">Slh</name>
    <name type="ORF">CG3539</name>
</gene>
<comment type="function">
    <text evidence="4">Non-vital for development.</text>
</comment>
<comment type="subcellular location">
    <subcellularLocation>
        <location evidence="1">Cytoplasm</location>
    </subcellularLocation>
    <subcellularLocation>
        <location evidence="1">Membrane</location>
        <topology evidence="1">Peripheral membrane protein</topology>
    </subcellularLocation>
</comment>
<comment type="tissue specificity">
    <text evidence="4">In embryos, from stage 14, expression is seen in posterior midgut, esophagus and salivary glands. No expression is seen in larval imaginal disks.</text>
</comment>
<comment type="similarity">
    <text evidence="5">Belongs to the STXBP/unc-18/SEC1 family.</text>
</comment>
<comment type="sequence caution" evidence="5">
    <conflict type="erroneous gene model prediction">
        <sequence resource="EMBL-CDS" id="AAC47550"/>
    </conflict>
</comment>
<comment type="sequence caution" evidence="5">
    <conflict type="miscellaneous discrepancy">
        <sequence resource="EMBL-CDS" id="AAY54838"/>
    </conflict>
    <text>Differs from position 182 onward for unknown reasons.</text>
</comment>
<proteinExistence type="evidence at transcript level"/>
<feature type="chain" id="PRO_0000206300" description="Protein sly1 homolog">
    <location>
        <begin position="1"/>
        <end position="639"/>
    </location>
</feature>
<feature type="repeat" description="1" evidence="5">
    <location>
        <begin position="85"/>
        <end position="121"/>
    </location>
</feature>
<feature type="repeat" description="2" evidence="5">
    <location>
        <begin position="203"/>
        <end position="245"/>
    </location>
</feature>
<feature type="repeat" description="3" evidence="5">
    <location>
        <begin position="423"/>
        <end position="460"/>
    </location>
</feature>
<feature type="repeat" description="4" evidence="5">
    <location>
        <begin position="464"/>
        <end position="500"/>
    </location>
</feature>
<feature type="region of interest" description="4 X approximate repeats">
    <location>
        <begin position="85"/>
        <end position="500"/>
    </location>
</feature>
<protein>
    <recommendedName>
        <fullName>Protein sly1 homolog</fullName>
    </recommendedName>
</protein>
<keyword id="KW-0963">Cytoplasm</keyword>
<keyword id="KW-0472">Membrane</keyword>
<keyword id="KW-1185">Reference proteome</keyword>
<keyword id="KW-0677">Repeat</keyword>
<organism>
    <name type="scientific">Drosophila melanogaster</name>
    <name type="common">Fruit fly</name>
    <dbReference type="NCBI Taxonomy" id="7227"/>
    <lineage>
        <taxon>Eukaryota</taxon>
        <taxon>Metazoa</taxon>
        <taxon>Ecdysozoa</taxon>
        <taxon>Arthropoda</taxon>
        <taxon>Hexapoda</taxon>
        <taxon>Insecta</taxon>
        <taxon>Pterygota</taxon>
        <taxon>Neoptera</taxon>
        <taxon>Endopterygota</taxon>
        <taxon>Diptera</taxon>
        <taxon>Brachycera</taxon>
        <taxon>Muscomorpha</taxon>
        <taxon>Ephydroidea</taxon>
        <taxon>Drosophilidae</taxon>
        <taxon>Drosophila</taxon>
        <taxon>Sophophora</taxon>
    </lineage>
</organism>
<evidence type="ECO:0000250" key="1"/>
<evidence type="ECO:0000269" key="2">
    <source>
    </source>
</evidence>
<evidence type="ECO:0000269" key="3">
    <source>
    </source>
</evidence>
<evidence type="ECO:0000269" key="4">
    <source>
    </source>
</evidence>
<evidence type="ECO:0000305" key="5"/>
<evidence type="ECO:0000312" key="6">
    <source>
        <dbReference type="EMBL" id="AAL48617.1"/>
    </source>
</evidence>